<name>CDD_KLEP7</name>
<comment type="function">
    <text evidence="1">This enzyme scavenges exogenous and endogenous cytidine and 2'-deoxycytidine for UMP synthesis.</text>
</comment>
<comment type="catalytic activity">
    <reaction evidence="1">
        <text>cytidine + H2O + H(+) = uridine + NH4(+)</text>
        <dbReference type="Rhea" id="RHEA:16069"/>
        <dbReference type="ChEBI" id="CHEBI:15377"/>
        <dbReference type="ChEBI" id="CHEBI:15378"/>
        <dbReference type="ChEBI" id="CHEBI:16704"/>
        <dbReference type="ChEBI" id="CHEBI:17562"/>
        <dbReference type="ChEBI" id="CHEBI:28938"/>
        <dbReference type="EC" id="3.5.4.5"/>
    </reaction>
</comment>
<comment type="catalytic activity">
    <reaction evidence="1">
        <text>2'-deoxycytidine + H2O + H(+) = 2'-deoxyuridine + NH4(+)</text>
        <dbReference type="Rhea" id="RHEA:13433"/>
        <dbReference type="ChEBI" id="CHEBI:15377"/>
        <dbReference type="ChEBI" id="CHEBI:15378"/>
        <dbReference type="ChEBI" id="CHEBI:15698"/>
        <dbReference type="ChEBI" id="CHEBI:16450"/>
        <dbReference type="ChEBI" id="CHEBI:28938"/>
        <dbReference type="EC" id="3.5.4.5"/>
    </reaction>
</comment>
<comment type="cofactor">
    <cofactor evidence="1">
        <name>Zn(2+)</name>
        <dbReference type="ChEBI" id="CHEBI:29105"/>
    </cofactor>
    <text evidence="1">Binds 1 zinc ion.</text>
</comment>
<comment type="subunit">
    <text evidence="1">Homodimer.</text>
</comment>
<comment type="similarity">
    <text evidence="1">Belongs to the cytidine and deoxycytidylate deaminase family.</text>
</comment>
<organism>
    <name type="scientific">Klebsiella pneumoniae subsp. pneumoniae (strain ATCC 700721 / MGH 78578)</name>
    <dbReference type="NCBI Taxonomy" id="272620"/>
    <lineage>
        <taxon>Bacteria</taxon>
        <taxon>Pseudomonadati</taxon>
        <taxon>Pseudomonadota</taxon>
        <taxon>Gammaproteobacteria</taxon>
        <taxon>Enterobacterales</taxon>
        <taxon>Enterobacteriaceae</taxon>
        <taxon>Klebsiella/Raoultella group</taxon>
        <taxon>Klebsiella</taxon>
        <taxon>Klebsiella pneumoniae complex</taxon>
    </lineage>
</organism>
<proteinExistence type="evidence at protein level"/>
<keyword id="KW-0002">3D-structure</keyword>
<keyword id="KW-0378">Hydrolase</keyword>
<keyword id="KW-0479">Metal-binding</keyword>
<keyword id="KW-0862">Zinc</keyword>
<reference key="1">
    <citation type="submission" date="2006-09" db="EMBL/GenBank/DDBJ databases">
        <authorList>
            <consortium name="The Klebsiella pneumonia Genome Sequencing Project"/>
            <person name="McClelland M."/>
            <person name="Sanderson E.K."/>
            <person name="Spieth J."/>
            <person name="Clifton W.S."/>
            <person name="Latreille P."/>
            <person name="Sabo A."/>
            <person name="Pepin K."/>
            <person name="Bhonagiri V."/>
            <person name="Porwollik S."/>
            <person name="Ali J."/>
            <person name="Wilson R.K."/>
        </authorList>
    </citation>
    <scope>NUCLEOTIDE SEQUENCE [LARGE SCALE GENOMIC DNA]</scope>
    <source>
        <strain>ATCC 700721 / MGH 78578</strain>
    </source>
</reference>
<accession>A6TBN1</accession>
<gene>
    <name evidence="1" type="primary">cdd</name>
    <name type="ordered locus">KPN78578_25410</name>
    <name type="ORF">KPN_02584</name>
</gene>
<protein>
    <recommendedName>
        <fullName evidence="1">Cytidine deaminase</fullName>
        <ecNumber evidence="1">3.5.4.5</ecNumber>
    </recommendedName>
    <alternativeName>
        <fullName evidence="1">Cytidine aminohydrolase</fullName>
        <shortName evidence="1">CDA</shortName>
    </alternativeName>
</protein>
<feature type="chain" id="PRO_1000068957" description="Cytidine deaminase">
    <location>
        <begin position="1"/>
        <end position="294"/>
    </location>
</feature>
<feature type="domain" description="CMP/dCMP-type deaminase 1" evidence="2">
    <location>
        <begin position="48"/>
        <end position="168"/>
    </location>
</feature>
<feature type="domain" description="CMP/dCMP-type deaminase 2" evidence="2">
    <location>
        <begin position="186"/>
        <end position="294"/>
    </location>
</feature>
<feature type="active site" description="Proton donor" evidence="1">
    <location>
        <position position="104"/>
    </location>
</feature>
<feature type="binding site" evidence="1">
    <location>
        <begin position="89"/>
        <end position="91"/>
    </location>
    <ligand>
        <name>substrate</name>
    </ligand>
</feature>
<feature type="binding site" evidence="1">
    <location>
        <position position="102"/>
    </location>
    <ligand>
        <name>Zn(2+)</name>
        <dbReference type="ChEBI" id="CHEBI:29105"/>
        <note>catalytic</note>
    </ligand>
</feature>
<feature type="binding site" evidence="1">
    <location>
        <position position="129"/>
    </location>
    <ligand>
        <name>Zn(2+)</name>
        <dbReference type="ChEBI" id="CHEBI:29105"/>
        <note>catalytic</note>
    </ligand>
</feature>
<feature type="binding site" evidence="1">
    <location>
        <position position="132"/>
    </location>
    <ligand>
        <name>Zn(2+)</name>
        <dbReference type="ChEBI" id="CHEBI:29105"/>
        <note>catalytic</note>
    </ligand>
</feature>
<feature type="helix" evidence="3">
    <location>
        <begin position="6"/>
        <end position="10"/>
    </location>
</feature>
<feature type="helix" evidence="3">
    <location>
        <begin position="14"/>
        <end position="20"/>
    </location>
</feature>
<feature type="turn" evidence="3">
    <location>
        <begin position="21"/>
        <end position="24"/>
    </location>
</feature>
<feature type="strand" evidence="3">
    <location>
        <begin position="31"/>
        <end position="33"/>
    </location>
</feature>
<feature type="helix" evidence="3">
    <location>
        <begin position="35"/>
        <end position="45"/>
    </location>
</feature>
<feature type="helix" evidence="3">
    <location>
        <begin position="49"/>
        <end position="61"/>
    </location>
</feature>
<feature type="turn" evidence="3">
    <location>
        <begin position="67"/>
        <end position="69"/>
    </location>
</feature>
<feature type="strand" evidence="3">
    <location>
        <begin position="74"/>
        <end position="79"/>
    </location>
</feature>
<feature type="strand" evidence="3">
    <location>
        <begin position="84"/>
        <end position="88"/>
    </location>
</feature>
<feature type="helix" evidence="3">
    <location>
        <begin position="97"/>
        <end position="99"/>
    </location>
</feature>
<feature type="helix" evidence="3">
    <location>
        <begin position="103"/>
        <end position="113"/>
    </location>
</feature>
<feature type="strand" evidence="3">
    <location>
        <begin position="119"/>
        <end position="126"/>
    </location>
</feature>
<feature type="helix" evidence="3">
    <location>
        <begin position="130"/>
        <end position="136"/>
    </location>
</feature>
<feature type="helix" evidence="3">
    <location>
        <begin position="142"/>
        <end position="144"/>
    </location>
</feature>
<feature type="strand" evidence="3">
    <location>
        <begin position="146"/>
        <end position="148"/>
    </location>
</feature>
<feature type="helix" evidence="3">
    <location>
        <begin position="157"/>
        <end position="160"/>
    </location>
</feature>
<feature type="helix" evidence="3">
    <location>
        <begin position="167"/>
        <end position="170"/>
    </location>
</feature>
<feature type="helix" evidence="3">
    <location>
        <begin position="190"/>
        <end position="200"/>
    </location>
</feature>
<feature type="turn" evidence="3">
    <location>
        <begin position="205"/>
        <end position="207"/>
    </location>
</feature>
<feature type="strand" evidence="3">
    <location>
        <begin position="211"/>
        <end position="217"/>
    </location>
</feature>
<feature type="strand" evidence="3">
    <location>
        <begin position="222"/>
        <end position="226"/>
    </location>
</feature>
<feature type="helix" evidence="3">
    <location>
        <begin position="239"/>
        <end position="249"/>
    </location>
</feature>
<feature type="helix" evidence="3">
    <location>
        <begin position="254"/>
        <end position="256"/>
    </location>
</feature>
<feature type="strand" evidence="3">
    <location>
        <begin position="257"/>
        <end position="264"/>
    </location>
</feature>
<feature type="helix" evidence="3">
    <location>
        <begin position="273"/>
        <end position="282"/>
    </location>
</feature>
<feature type="strand" evidence="3">
    <location>
        <begin position="289"/>
        <end position="292"/>
    </location>
</feature>
<dbReference type="EC" id="3.5.4.5" evidence="1"/>
<dbReference type="EMBL" id="CP000647">
    <property type="protein sequence ID" value="ABR78002.1"/>
    <property type="molecule type" value="Genomic_DNA"/>
</dbReference>
<dbReference type="RefSeq" id="WP_002912869.1">
    <property type="nucleotide sequence ID" value="NC_009648.1"/>
</dbReference>
<dbReference type="PDB" id="6K63">
    <property type="method" value="X-ray"/>
    <property type="resolution" value="2.07 A"/>
    <property type="chains" value="A/B/C/D=1-294"/>
</dbReference>
<dbReference type="PDBsum" id="6K63"/>
<dbReference type="SMR" id="A6TBN1"/>
<dbReference type="STRING" id="272620.KPN_02584"/>
<dbReference type="jPOST" id="A6TBN1"/>
<dbReference type="PaxDb" id="272620-KPN_02584"/>
<dbReference type="EnsemblBacteria" id="ABR78002">
    <property type="protein sequence ID" value="ABR78002"/>
    <property type="gene ID" value="KPN_02584"/>
</dbReference>
<dbReference type="KEGG" id="kpn:KPN_02584"/>
<dbReference type="HOGENOM" id="CLU_052424_0_0_6"/>
<dbReference type="BRENDA" id="3.5.4.5">
    <property type="organism ID" value="2817"/>
</dbReference>
<dbReference type="Proteomes" id="UP000000265">
    <property type="component" value="Chromosome"/>
</dbReference>
<dbReference type="GO" id="GO:0005829">
    <property type="term" value="C:cytosol"/>
    <property type="evidence" value="ECO:0007669"/>
    <property type="project" value="TreeGrafter"/>
</dbReference>
<dbReference type="GO" id="GO:0004126">
    <property type="term" value="F:cytidine deaminase activity"/>
    <property type="evidence" value="ECO:0007669"/>
    <property type="project" value="UniProtKB-UniRule"/>
</dbReference>
<dbReference type="GO" id="GO:0042802">
    <property type="term" value="F:identical protein binding"/>
    <property type="evidence" value="ECO:0007669"/>
    <property type="project" value="UniProtKB-ARBA"/>
</dbReference>
<dbReference type="GO" id="GO:0008270">
    <property type="term" value="F:zinc ion binding"/>
    <property type="evidence" value="ECO:0007669"/>
    <property type="project" value="UniProtKB-UniRule"/>
</dbReference>
<dbReference type="GO" id="GO:0009972">
    <property type="term" value="P:cytidine deamination"/>
    <property type="evidence" value="ECO:0007669"/>
    <property type="project" value="InterPro"/>
</dbReference>
<dbReference type="CDD" id="cd01283">
    <property type="entry name" value="cytidine_deaminase"/>
    <property type="match status" value="2"/>
</dbReference>
<dbReference type="FunFam" id="3.40.140.10:FF:000006">
    <property type="entry name" value="Cytidine deaminase"/>
    <property type="match status" value="1"/>
</dbReference>
<dbReference type="FunFam" id="3.40.140.10:FF:000007">
    <property type="entry name" value="Cytidine deaminase"/>
    <property type="match status" value="1"/>
</dbReference>
<dbReference type="Gene3D" id="3.40.140.10">
    <property type="entry name" value="Cytidine Deaminase, domain 2"/>
    <property type="match status" value="2"/>
</dbReference>
<dbReference type="HAMAP" id="MF_01558">
    <property type="entry name" value="Cyt_deam"/>
    <property type="match status" value="1"/>
</dbReference>
<dbReference type="InterPro" id="IPR016192">
    <property type="entry name" value="APOBEC/CMP_deaminase_Zn-bd"/>
</dbReference>
<dbReference type="InterPro" id="IPR002125">
    <property type="entry name" value="CMP_dCMP_dom"/>
</dbReference>
<dbReference type="InterPro" id="IPR013171">
    <property type="entry name" value="Cyd/dCyd_deaminase_Zn-bd"/>
</dbReference>
<dbReference type="InterPro" id="IPR050202">
    <property type="entry name" value="Cyt/Deoxycyt_deaminase"/>
</dbReference>
<dbReference type="InterPro" id="IPR006263">
    <property type="entry name" value="Cyt_deam_dimer"/>
</dbReference>
<dbReference type="InterPro" id="IPR016193">
    <property type="entry name" value="Cytidine_deaminase-like"/>
</dbReference>
<dbReference type="InterPro" id="IPR020797">
    <property type="entry name" value="Cytidine_deaminase_bacteria"/>
</dbReference>
<dbReference type="NCBIfam" id="TIGR01355">
    <property type="entry name" value="cyt_deam_dimer"/>
    <property type="match status" value="1"/>
</dbReference>
<dbReference type="NCBIfam" id="NF006537">
    <property type="entry name" value="PRK09027.1"/>
    <property type="match status" value="1"/>
</dbReference>
<dbReference type="PANTHER" id="PTHR11644">
    <property type="entry name" value="CYTIDINE DEAMINASE"/>
    <property type="match status" value="1"/>
</dbReference>
<dbReference type="PANTHER" id="PTHR11644:SF2">
    <property type="entry name" value="CYTIDINE DEAMINASE"/>
    <property type="match status" value="1"/>
</dbReference>
<dbReference type="Pfam" id="PF00383">
    <property type="entry name" value="dCMP_cyt_deam_1"/>
    <property type="match status" value="1"/>
</dbReference>
<dbReference type="Pfam" id="PF08211">
    <property type="entry name" value="dCMP_cyt_deam_2"/>
    <property type="match status" value="1"/>
</dbReference>
<dbReference type="PIRSF" id="PIRSF006334">
    <property type="entry name" value="Cdd_plus_pseudo"/>
    <property type="match status" value="1"/>
</dbReference>
<dbReference type="SUPFAM" id="SSF53927">
    <property type="entry name" value="Cytidine deaminase-like"/>
    <property type="match status" value="2"/>
</dbReference>
<dbReference type="PROSITE" id="PS00903">
    <property type="entry name" value="CYT_DCMP_DEAMINASES_1"/>
    <property type="match status" value="1"/>
</dbReference>
<dbReference type="PROSITE" id="PS51747">
    <property type="entry name" value="CYT_DCMP_DEAMINASES_2"/>
    <property type="match status" value="2"/>
</dbReference>
<evidence type="ECO:0000255" key="1">
    <source>
        <dbReference type="HAMAP-Rule" id="MF_01558"/>
    </source>
</evidence>
<evidence type="ECO:0000255" key="2">
    <source>
        <dbReference type="PROSITE-ProRule" id="PRU01083"/>
    </source>
</evidence>
<evidence type="ECO:0007829" key="3">
    <source>
        <dbReference type="PDB" id="6K63"/>
    </source>
</evidence>
<sequence>MHSRFQAALTTLAADLQAAIAPMLADPHFPALLEADQVATLQHATGLDEDALAFALLPLAAACARPDLSHFNVGAIARGVSGRWYFGGNMEFLGATMQQTVHAEQSAISHAWLRGETSLRAITVNYTPCGHCRQFMNELNSGLALRIHLPGREAHALEHYLPDAFGPKDLEIKTLLMDEQDHGFPVSGDALTQAAIQAANRCHAPYSHSPSGVALELKDGTIFSGSYAENAAFNPTLPPLQGALNLLSLNGYDYPAIQRAILAEKADAALIQWDATVATLKALGCHNIERVLLG</sequence>